<accession>Q74ZH6</accession>
<keyword id="KW-0004">4Fe-4S</keyword>
<keyword id="KW-0408">Iron</keyword>
<keyword id="KW-0411">Iron-sulfur</keyword>
<keyword id="KW-0479">Metal-binding</keyword>
<keyword id="KW-0496">Mitochondrion</keyword>
<keyword id="KW-1185">Reference proteome</keyword>
<keyword id="KW-0949">S-adenosyl-L-methionine</keyword>
<keyword id="KW-0808">Transferase</keyword>
<keyword id="KW-0809">Transit peptide</keyword>
<reference key="1">
    <citation type="journal article" date="2004" name="Science">
        <title>The Ashbya gossypii genome as a tool for mapping the ancient Saccharomyces cerevisiae genome.</title>
        <authorList>
            <person name="Dietrich F.S."/>
            <person name="Voegeli S."/>
            <person name="Brachat S."/>
            <person name="Lerch A."/>
            <person name="Gates K."/>
            <person name="Steiner S."/>
            <person name="Mohr C."/>
            <person name="Poehlmann R."/>
            <person name="Luedi P."/>
            <person name="Choi S."/>
            <person name="Wing R.A."/>
            <person name="Flavier A."/>
            <person name="Gaffney T.D."/>
            <person name="Philippsen P."/>
        </authorList>
    </citation>
    <scope>NUCLEOTIDE SEQUENCE [LARGE SCALE GENOMIC DNA]</scope>
    <source>
        <strain>ATCC 10895 / CBS 109.51 / FGSC 9923 / NRRL Y-1056</strain>
    </source>
</reference>
<reference key="2">
    <citation type="journal article" date="2013" name="G3 (Bethesda)">
        <title>Genomes of Ashbya fungi isolated from insects reveal four mating-type loci, numerous translocations, lack of transposons, and distinct gene duplications.</title>
        <authorList>
            <person name="Dietrich F.S."/>
            <person name="Voegeli S."/>
            <person name="Kuo S."/>
            <person name="Philippsen P."/>
        </authorList>
    </citation>
    <scope>GENOME REANNOTATION</scope>
    <source>
        <strain>ATCC 10895 / CBS 109.51 / FGSC 9923 / NRRL Y-1056</strain>
    </source>
</reference>
<protein>
    <recommendedName>
        <fullName evidence="1">Lipoyl synthase, mitochondrial</fullName>
        <ecNumber evidence="1">2.8.1.8</ecNumber>
    </recommendedName>
    <alternativeName>
        <fullName evidence="1">Lipoate synthase</fullName>
        <shortName evidence="1">LS</shortName>
        <shortName evidence="1">Lip-syn</shortName>
    </alternativeName>
    <alternativeName>
        <fullName evidence="1">Lipoic acid synthase</fullName>
    </alternativeName>
</protein>
<feature type="transit peptide" description="Mitochondrion" evidence="1">
    <location>
        <begin position="1"/>
        <end position="32"/>
    </location>
</feature>
<feature type="chain" id="PRO_0000398250" description="Lipoyl synthase, mitochondrial">
    <location>
        <begin position="33"/>
        <end position="369"/>
    </location>
</feature>
<feature type="domain" description="Radical SAM core" evidence="2">
    <location>
        <begin position="121"/>
        <end position="340"/>
    </location>
</feature>
<feature type="binding site" evidence="1">
    <location>
        <position position="106"/>
    </location>
    <ligand>
        <name>[4Fe-4S] cluster</name>
        <dbReference type="ChEBI" id="CHEBI:49883"/>
        <label>1</label>
    </ligand>
</feature>
<feature type="binding site" evidence="1">
    <location>
        <position position="111"/>
    </location>
    <ligand>
        <name>[4Fe-4S] cluster</name>
        <dbReference type="ChEBI" id="CHEBI:49883"/>
        <label>1</label>
    </ligand>
</feature>
<feature type="binding site" evidence="1">
    <location>
        <position position="117"/>
    </location>
    <ligand>
        <name>[4Fe-4S] cluster</name>
        <dbReference type="ChEBI" id="CHEBI:49883"/>
        <label>1</label>
    </ligand>
</feature>
<feature type="binding site" evidence="1">
    <location>
        <position position="136"/>
    </location>
    <ligand>
        <name>[4Fe-4S] cluster</name>
        <dbReference type="ChEBI" id="CHEBI:49883"/>
        <label>2</label>
        <note>4Fe-4S-S-AdoMet</note>
    </ligand>
</feature>
<feature type="binding site" evidence="1">
    <location>
        <position position="140"/>
    </location>
    <ligand>
        <name>[4Fe-4S] cluster</name>
        <dbReference type="ChEBI" id="CHEBI:49883"/>
        <label>2</label>
        <note>4Fe-4S-S-AdoMet</note>
    </ligand>
</feature>
<feature type="binding site" evidence="1">
    <location>
        <position position="143"/>
    </location>
    <ligand>
        <name>[4Fe-4S] cluster</name>
        <dbReference type="ChEBI" id="CHEBI:49883"/>
        <label>2</label>
        <note>4Fe-4S-S-AdoMet</note>
    </ligand>
</feature>
<feature type="binding site" evidence="1">
    <location>
        <position position="351"/>
    </location>
    <ligand>
        <name>[4Fe-4S] cluster</name>
        <dbReference type="ChEBI" id="CHEBI:49883"/>
        <label>1</label>
    </ligand>
</feature>
<organism>
    <name type="scientific">Eremothecium gossypii (strain ATCC 10895 / CBS 109.51 / FGSC 9923 / NRRL Y-1056)</name>
    <name type="common">Yeast</name>
    <name type="synonym">Ashbya gossypii</name>
    <dbReference type="NCBI Taxonomy" id="284811"/>
    <lineage>
        <taxon>Eukaryota</taxon>
        <taxon>Fungi</taxon>
        <taxon>Dikarya</taxon>
        <taxon>Ascomycota</taxon>
        <taxon>Saccharomycotina</taxon>
        <taxon>Saccharomycetes</taxon>
        <taxon>Saccharomycetales</taxon>
        <taxon>Saccharomycetaceae</taxon>
        <taxon>Eremothecium</taxon>
    </lineage>
</organism>
<dbReference type="EC" id="2.8.1.8" evidence="1"/>
<dbReference type="EMBL" id="AE016820">
    <property type="protein sequence ID" value="AAS54721.1"/>
    <property type="molecule type" value="Genomic_DNA"/>
</dbReference>
<dbReference type="RefSeq" id="NP_986897.1">
    <property type="nucleotide sequence ID" value="NM_211959.1"/>
</dbReference>
<dbReference type="SMR" id="Q74ZH6"/>
<dbReference type="FunCoup" id="Q74ZH6">
    <property type="interactions" value="593"/>
</dbReference>
<dbReference type="STRING" id="284811.Q74ZH6"/>
<dbReference type="EnsemblFungi" id="AAS54721">
    <property type="protein sequence ID" value="AAS54721"/>
    <property type="gene ID" value="AGOS_AGR231C"/>
</dbReference>
<dbReference type="GeneID" id="4623199"/>
<dbReference type="KEGG" id="ago:AGOS_AGR231C"/>
<dbReference type="eggNOG" id="KOG2672">
    <property type="taxonomic scope" value="Eukaryota"/>
</dbReference>
<dbReference type="HOGENOM" id="CLU_033144_0_1_1"/>
<dbReference type="InParanoid" id="Q74ZH6"/>
<dbReference type="OMA" id="PYCDIDF"/>
<dbReference type="OrthoDB" id="3231at2759"/>
<dbReference type="UniPathway" id="UPA00538">
    <property type="reaction ID" value="UER00593"/>
</dbReference>
<dbReference type="Proteomes" id="UP000000591">
    <property type="component" value="Chromosome VII"/>
</dbReference>
<dbReference type="GO" id="GO:0005739">
    <property type="term" value="C:mitochondrion"/>
    <property type="evidence" value="ECO:0000318"/>
    <property type="project" value="GO_Central"/>
</dbReference>
<dbReference type="GO" id="GO:0051539">
    <property type="term" value="F:4 iron, 4 sulfur cluster binding"/>
    <property type="evidence" value="ECO:0007669"/>
    <property type="project" value="UniProtKB-UniRule"/>
</dbReference>
<dbReference type="GO" id="GO:0016992">
    <property type="term" value="F:lipoate synthase activity"/>
    <property type="evidence" value="ECO:0000318"/>
    <property type="project" value="GO_Central"/>
</dbReference>
<dbReference type="GO" id="GO:0046872">
    <property type="term" value="F:metal ion binding"/>
    <property type="evidence" value="ECO:0007669"/>
    <property type="project" value="UniProtKB-KW"/>
</dbReference>
<dbReference type="GO" id="GO:0009107">
    <property type="term" value="P:lipoate biosynthetic process"/>
    <property type="evidence" value="ECO:0000318"/>
    <property type="project" value="GO_Central"/>
</dbReference>
<dbReference type="CDD" id="cd01335">
    <property type="entry name" value="Radical_SAM"/>
    <property type="match status" value="1"/>
</dbReference>
<dbReference type="FunFam" id="3.20.20.70:FF:000036">
    <property type="entry name" value="Lipoyl synthase, mitochondrial"/>
    <property type="match status" value="1"/>
</dbReference>
<dbReference type="Gene3D" id="3.20.20.70">
    <property type="entry name" value="Aldolase class I"/>
    <property type="match status" value="1"/>
</dbReference>
<dbReference type="HAMAP" id="MF_00206">
    <property type="entry name" value="Lipoyl_synth"/>
    <property type="match status" value="1"/>
</dbReference>
<dbReference type="InterPro" id="IPR013785">
    <property type="entry name" value="Aldolase_TIM"/>
</dbReference>
<dbReference type="InterPro" id="IPR006638">
    <property type="entry name" value="Elp3/MiaA/NifB-like_rSAM"/>
</dbReference>
<dbReference type="InterPro" id="IPR031691">
    <property type="entry name" value="LIAS_N"/>
</dbReference>
<dbReference type="InterPro" id="IPR003698">
    <property type="entry name" value="Lipoyl_synth"/>
</dbReference>
<dbReference type="InterPro" id="IPR007197">
    <property type="entry name" value="rSAM"/>
</dbReference>
<dbReference type="NCBIfam" id="TIGR00510">
    <property type="entry name" value="lipA"/>
    <property type="match status" value="1"/>
</dbReference>
<dbReference type="NCBIfam" id="NF004019">
    <property type="entry name" value="PRK05481.1"/>
    <property type="match status" value="1"/>
</dbReference>
<dbReference type="NCBIfam" id="NF009544">
    <property type="entry name" value="PRK12928.1"/>
    <property type="match status" value="1"/>
</dbReference>
<dbReference type="PANTHER" id="PTHR10949">
    <property type="entry name" value="LIPOYL SYNTHASE"/>
    <property type="match status" value="1"/>
</dbReference>
<dbReference type="PANTHER" id="PTHR10949:SF0">
    <property type="entry name" value="LIPOYL SYNTHASE, MITOCHONDRIAL"/>
    <property type="match status" value="1"/>
</dbReference>
<dbReference type="Pfam" id="PF16881">
    <property type="entry name" value="LIAS_N"/>
    <property type="match status" value="1"/>
</dbReference>
<dbReference type="Pfam" id="PF04055">
    <property type="entry name" value="Radical_SAM"/>
    <property type="match status" value="1"/>
</dbReference>
<dbReference type="PIRSF" id="PIRSF005963">
    <property type="entry name" value="Lipoyl_synth"/>
    <property type="match status" value="1"/>
</dbReference>
<dbReference type="SFLD" id="SFLDF00271">
    <property type="entry name" value="lipoyl_synthase"/>
    <property type="match status" value="1"/>
</dbReference>
<dbReference type="SFLD" id="SFLDS00029">
    <property type="entry name" value="Radical_SAM"/>
    <property type="match status" value="1"/>
</dbReference>
<dbReference type="SMART" id="SM00729">
    <property type="entry name" value="Elp3"/>
    <property type="match status" value="1"/>
</dbReference>
<dbReference type="SUPFAM" id="SSF102114">
    <property type="entry name" value="Radical SAM enzymes"/>
    <property type="match status" value="1"/>
</dbReference>
<dbReference type="PROSITE" id="PS51918">
    <property type="entry name" value="RADICAL_SAM"/>
    <property type="match status" value="1"/>
</dbReference>
<proteinExistence type="inferred from homology"/>
<evidence type="ECO:0000255" key="1">
    <source>
        <dbReference type="HAMAP-Rule" id="MF_03123"/>
    </source>
</evidence>
<evidence type="ECO:0000255" key="2">
    <source>
        <dbReference type="PROSITE-ProRule" id="PRU01266"/>
    </source>
</evidence>
<gene>
    <name type="ordered locus">AGR231C</name>
</gene>
<sequence length="369" mass="41501">MLTKGVRALAWSPRRYITLDAEAAKPVVAKRRRMTEFTDKLNKGPSFEDFLTGKAAQMTLDPLEEARQNAEESKKLPAWLKVPIPKGKNFHKLKEDVRDLKLSTVCEEAKCPNIGECWGGNKGSATATIMLLGDTCTRGCRFCSVKTNRTPAKPDPKEPENTAEAISRWGLGYVVLTMVDRDDLPDGGAHHLAETVQRIKQKAPHILVETLAGDFRGNLEMVDVMARSGLDVYAHNVETVEALTPHVRDRRATYQQSLSVLKRAKQTVPTLVTKTSIMLGMGETDEQVLQTMKDLRAVDCDVVTFGQYMRPTRRHMKVVEYVKPEKFDYWKEKALELGFLYCASGPLVRSSYKAGEAYIENVLRNRRQA</sequence>
<name>LIPA_EREGS</name>
<comment type="function">
    <text evidence="1">Catalyzes the radical-mediated insertion of two sulfur atoms into the C-6 and C-8 positions of the octanoyl moiety bound to the lipoyl domains of lipoate-dependent enzymes, thereby converting the octanoylated domains into lipoylated derivatives.</text>
</comment>
<comment type="catalytic activity">
    <reaction evidence="1">
        <text>[[Fe-S] cluster scaffold protein carrying a second [4Fe-4S](2+) cluster] + N(6)-octanoyl-L-lysyl-[protein] + 2 oxidized [2Fe-2S]-[ferredoxin] + 2 S-adenosyl-L-methionine + 4 H(+) = [[Fe-S] cluster scaffold protein] + N(6)-[(R)-dihydrolipoyl]-L-lysyl-[protein] + 4 Fe(3+) + 2 hydrogen sulfide + 2 5'-deoxyadenosine + 2 L-methionine + 2 reduced [2Fe-2S]-[ferredoxin]</text>
        <dbReference type="Rhea" id="RHEA:16585"/>
        <dbReference type="Rhea" id="RHEA-COMP:9928"/>
        <dbReference type="Rhea" id="RHEA-COMP:10000"/>
        <dbReference type="Rhea" id="RHEA-COMP:10001"/>
        <dbReference type="Rhea" id="RHEA-COMP:10475"/>
        <dbReference type="Rhea" id="RHEA-COMP:14568"/>
        <dbReference type="Rhea" id="RHEA-COMP:14569"/>
        <dbReference type="ChEBI" id="CHEBI:15378"/>
        <dbReference type="ChEBI" id="CHEBI:17319"/>
        <dbReference type="ChEBI" id="CHEBI:29034"/>
        <dbReference type="ChEBI" id="CHEBI:29919"/>
        <dbReference type="ChEBI" id="CHEBI:33722"/>
        <dbReference type="ChEBI" id="CHEBI:33737"/>
        <dbReference type="ChEBI" id="CHEBI:33738"/>
        <dbReference type="ChEBI" id="CHEBI:57844"/>
        <dbReference type="ChEBI" id="CHEBI:59789"/>
        <dbReference type="ChEBI" id="CHEBI:78809"/>
        <dbReference type="ChEBI" id="CHEBI:83100"/>
        <dbReference type="EC" id="2.8.1.8"/>
    </reaction>
</comment>
<comment type="cofactor">
    <cofactor evidence="1">
        <name>[4Fe-4S] cluster</name>
        <dbReference type="ChEBI" id="CHEBI:49883"/>
    </cofactor>
    <text evidence="1">Binds 2 [4Fe-4S] clusters per subunit. One cluster is coordinated with 3 cysteines and an exchangeable S-adenosyl-L-methionine.</text>
</comment>
<comment type="pathway">
    <text evidence="1">Protein modification; protein lipoylation via endogenous pathway; protein N(6)-(lipoyl)lysine from octanoyl-[acyl-carrier-protein]: step 2/2.</text>
</comment>
<comment type="subcellular location">
    <subcellularLocation>
        <location evidence="1">Mitochondrion</location>
    </subcellularLocation>
</comment>
<comment type="similarity">
    <text evidence="1">Belongs to the radical SAM superfamily. Lipoyl synthase family.</text>
</comment>